<gene>
    <name type="primary">SAC7</name>
    <name type="synonym">RHD4</name>
    <name type="synonym">SAC1C</name>
    <name type="ordered locus">At3g51460</name>
    <name type="ORF">F26O13.100</name>
</gene>
<organism>
    <name type="scientific">Arabidopsis thaliana</name>
    <name type="common">Mouse-ear cress</name>
    <dbReference type="NCBI Taxonomy" id="3702"/>
    <lineage>
        <taxon>Eukaryota</taxon>
        <taxon>Viridiplantae</taxon>
        <taxon>Streptophyta</taxon>
        <taxon>Embryophyta</taxon>
        <taxon>Tracheophyta</taxon>
        <taxon>Spermatophyta</taxon>
        <taxon>Magnoliopsida</taxon>
        <taxon>eudicotyledons</taxon>
        <taxon>Gunneridae</taxon>
        <taxon>Pentapetalae</taxon>
        <taxon>rosids</taxon>
        <taxon>malvids</taxon>
        <taxon>Brassicales</taxon>
        <taxon>Brassicaceae</taxon>
        <taxon>Camelineae</taxon>
        <taxon>Arabidopsis</taxon>
    </lineage>
</organism>
<name>SAC7_ARATH</name>
<comment type="function">
    <text evidence="4 6 7">Phosphoinositide phosphatase that preferentially hydrolyzes PtdIns(4)P. Regulates the accumulation of PtdIns(4)P on membrane compartments at the tips of growing root hairs leading to proper root hair development.</text>
</comment>
<comment type="subcellular location">
    <subcellularLocation>
        <location evidence="4">Endoplasmic reticulum membrane</location>
        <topology evidence="2">Multi-pass membrane protein</topology>
    </subcellularLocation>
    <subcellularLocation>
        <location evidence="6">Cytoplasmic vesicle membrane</location>
        <topology evidence="2">Multi-pass membrane protein</topology>
    </subcellularLocation>
    <text evidence="6">Associated to tip-localized membranes in growing root hairs (PubMed:18281508).</text>
</comment>
<comment type="tissue specificity">
    <text evidence="4 5">Ubiquitous.</text>
</comment>
<comment type="induction">
    <text evidence="4">By wounding.</text>
</comment>
<comment type="domain">
    <text evidence="1">The phosphatase catalytic core motif (or RXNCXDCLDRTN motif) from the SAC domain is found in metal-independent protein phosphatases and inositol polyphosphate phosphatases.</text>
</comment>
<comment type="disruption phenotype">
    <text evidence="6">Short, bulged and branched root hairs. Accumulates elevated levels of PtdIns(4)P in roots.</text>
</comment>
<comment type="sequence caution" evidence="8">
    <conflict type="erroneous gene model prediction">
        <sequence resource="EMBL-CDS" id="CAB63010"/>
    </conflict>
</comment>
<accession>Q9C5G5</accession>
<accession>Q0WM67</accession>
<accession>Q9SD03</accession>
<keyword id="KW-0968">Cytoplasmic vesicle</keyword>
<keyword id="KW-0256">Endoplasmic reticulum</keyword>
<keyword id="KW-0378">Hydrolase</keyword>
<keyword id="KW-0472">Membrane</keyword>
<keyword id="KW-1185">Reference proteome</keyword>
<keyword id="KW-0812">Transmembrane</keyword>
<keyword id="KW-1133">Transmembrane helix</keyword>
<reference key="1">
    <citation type="journal article" date="2003" name="Plant J.">
        <title>Three SAC1-like genes show overlapping patterns of expression in Arabidopsis but are remarkably silent during embryo development.</title>
        <authorList>
            <person name="Despres B."/>
            <person name="Bouissonnie F."/>
            <person name="Wu H.J."/>
            <person name="Gomord V."/>
            <person name="Guilleminot J."/>
            <person name="Grellet F."/>
            <person name="Berger F."/>
            <person name="Delseny M."/>
            <person name="Devic M."/>
        </authorList>
    </citation>
    <scope>NUCLEOTIDE SEQUENCE [MRNA]</scope>
    <scope>TISSUE SPECIFICITY</scope>
    <scope>FUNCTION</scope>
    <scope>SUBCELLULAR LOCATION</scope>
    <scope>INDUCTION BY WOUNDING</scope>
    <source>
        <strain>cv. Wassilewskija</strain>
    </source>
</reference>
<reference key="2">
    <citation type="journal article" date="2003" name="Plant Physiol.">
        <title>The SAC domain-containing protein gene family in Arabidopsis.</title>
        <authorList>
            <person name="Zhong R."/>
            <person name="Ye Z.-H."/>
        </authorList>
    </citation>
    <scope>NUCLEOTIDE SEQUENCE [MRNA]</scope>
    <scope>GENE FAMILY</scope>
    <scope>DOMAIN</scope>
    <scope>TISSUE SPECIFICITY</scope>
</reference>
<reference key="3">
    <citation type="journal article" date="2000" name="Nature">
        <title>Sequence and analysis of chromosome 3 of the plant Arabidopsis thaliana.</title>
        <authorList>
            <person name="Salanoubat M."/>
            <person name="Lemcke K."/>
            <person name="Rieger M."/>
            <person name="Ansorge W."/>
            <person name="Unseld M."/>
            <person name="Fartmann B."/>
            <person name="Valle G."/>
            <person name="Bloecker H."/>
            <person name="Perez-Alonso M."/>
            <person name="Obermaier B."/>
            <person name="Delseny M."/>
            <person name="Boutry M."/>
            <person name="Grivell L.A."/>
            <person name="Mache R."/>
            <person name="Puigdomenech P."/>
            <person name="De Simone V."/>
            <person name="Choisne N."/>
            <person name="Artiguenave F."/>
            <person name="Robert C."/>
            <person name="Brottier P."/>
            <person name="Wincker P."/>
            <person name="Cattolico L."/>
            <person name="Weissenbach J."/>
            <person name="Saurin W."/>
            <person name="Quetier F."/>
            <person name="Schaefer M."/>
            <person name="Mueller-Auer S."/>
            <person name="Gabel C."/>
            <person name="Fuchs M."/>
            <person name="Benes V."/>
            <person name="Wurmbach E."/>
            <person name="Drzonek H."/>
            <person name="Erfle H."/>
            <person name="Jordan N."/>
            <person name="Bangert S."/>
            <person name="Wiedelmann R."/>
            <person name="Kranz H."/>
            <person name="Voss H."/>
            <person name="Holland R."/>
            <person name="Brandt P."/>
            <person name="Nyakatura G."/>
            <person name="Vezzi A."/>
            <person name="D'Angelo M."/>
            <person name="Pallavicini A."/>
            <person name="Toppo S."/>
            <person name="Simionati B."/>
            <person name="Conrad A."/>
            <person name="Hornischer K."/>
            <person name="Kauer G."/>
            <person name="Loehnert T.-H."/>
            <person name="Nordsiek G."/>
            <person name="Reichelt J."/>
            <person name="Scharfe M."/>
            <person name="Schoen O."/>
            <person name="Bargues M."/>
            <person name="Terol J."/>
            <person name="Climent J."/>
            <person name="Navarro P."/>
            <person name="Collado C."/>
            <person name="Perez-Perez A."/>
            <person name="Ottenwaelder B."/>
            <person name="Duchemin D."/>
            <person name="Cooke R."/>
            <person name="Laudie M."/>
            <person name="Berger-Llauro C."/>
            <person name="Purnelle B."/>
            <person name="Masuy D."/>
            <person name="de Haan M."/>
            <person name="Maarse A.C."/>
            <person name="Alcaraz J.-P."/>
            <person name="Cottet A."/>
            <person name="Casacuberta E."/>
            <person name="Monfort A."/>
            <person name="Argiriou A."/>
            <person name="Flores M."/>
            <person name="Liguori R."/>
            <person name="Vitale D."/>
            <person name="Mannhaupt G."/>
            <person name="Haase D."/>
            <person name="Schoof H."/>
            <person name="Rudd S."/>
            <person name="Zaccaria P."/>
            <person name="Mewes H.-W."/>
            <person name="Mayer K.F.X."/>
            <person name="Kaul S."/>
            <person name="Town C.D."/>
            <person name="Koo H.L."/>
            <person name="Tallon L.J."/>
            <person name="Jenkins J."/>
            <person name="Rooney T."/>
            <person name="Rizzo M."/>
            <person name="Walts A."/>
            <person name="Utterback T."/>
            <person name="Fujii C.Y."/>
            <person name="Shea T.P."/>
            <person name="Creasy T.H."/>
            <person name="Haas B."/>
            <person name="Maiti R."/>
            <person name="Wu D."/>
            <person name="Peterson J."/>
            <person name="Van Aken S."/>
            <person name="Pai G."/>
            <person name="Militscher J."/>
            <person name="Sellers P."/>
            <person name="Gill J.E."/>
            <person name="Feldblyum T.V."/>
            <person name="Preuss D."/>
            <person name="Lin X."/>
            <person name="Nierman W.C."/>
            <person name="Salzberg S.L."/>
            <person name="White O."/>
            <person name="Venter J.C."/>
            <person name="Fraser C.M."/>
            <person name="Kaneko T."/>
            <person name="Nakamura Y."/>
            <person name="Sato S."/>
            <person name="Kato T."/>
            <person name="Asamizu E."/>
            <person name="Sasamoto S."/>
            <person name="Kimura T."/>
            <person name="Idesawa K."/>
            <person name="Kawashima K."/>
            <person name="Kishida Y."/>
            <person name="Kiyokawa C."/>
            <person name="Kohara M."/>
            <person name="Matsumoto M."/>
            <person name="Matsuno A."/>
            <person name="Muraki A."/>
            <person name="Nakayama S."/>
            <person name="Nakazaki N."/>
            <person name="Shinpo S."/>
            <person name="Takeuchi C."/>
            <person name="Wada T."/>
            <person name="Watanabe A."/>
            <person name="Yamada M."/>
            <person name="Yasuda M."/>
            <person name="Tabata S."/>
        </authorList>
    </citation>
    <scope>NUCLEOTIDE SEQUENCE [LARGE SCALE GENOMIC DNA]</scope>
    <source>
        <strain>cv. Columbia</strain>
    </source>
</reference>
<reference key="4">
    <citation type="journal article" date="2017" name="Plant J.">
        <title>Araport11: a complete reannotation of the Arabidopsis thaliana reference genome.</title>
        <authorList>
            <person name="Cheng C.Y."/>
            <person name="Krishnakumar V."/>
            <person name="Chan A.P."/>
            <person name="Thibaud-Nissen F."/>
            <person name="Schobel S."/>
            <person name="Town C.D."/>
        </authorList>
    </citation>
    <scope>GENOME REANNOTATION</scope>
    <source>
        <strain>cv. Columbia</strain>
    </source>
</reference>
<reference key="5">
    <citation type="journal article" date="2003" name="Science">
        <title>Empirical analysis of transcriptional activity in the Arabidopsis genome.</title>
        <authorList>
            <person name="Yamada K."/>
            <person name="Lim J."/>
            <person name="Dale J.M."/>
            <person name="Chen H."/>
            <person name="Shinn P."/>
            <person name="Palm C.J."/>
            <person name="Southwick A.M."/>
            <person name="Wu H.C."/>
            <person name="Kim C.J."/>
            <person name="Nguyen M."/>
            <person name="Pham P.K."/>
            <person name="Cheuk R.F."/>
            <person name="Karlin-Newmann G."/>
            <person name="Liu S.X."/>
            <person name="Lam B."/>
            <person name="Sakano H."/>
            <person name="Wu T."/>
            <person name="Yu G."/>
            <person name="Miranda M."/>
            <person name="Quach H.L."/>
            <person name="Tripp M."/>
            <person name="Chang C.H."/>
            <person name="Lee J.M."/>
            <person name="Toriumi M.J."/>
            <person name="Chan M.M."/>
            <person name="Tang C.C."/>
            <person name="Onodera C.S."/>
            <person name="Deng J.M."/>
            <person name="Akiyama K."/>
            <person name="Ansari Y."/>
            <person name="Arakawa T."/>
            <person name="Banh J."/>
            <person name="Banno F."/>
            <person name="Bowser L."/>
            <person name="Brooks S.Y."/>
            <person name="Carninci P."/>
            <person name="Chao Q."/>
            <person name="Choy N."/>
            <person name="Enju A."/>
            <person name="Goldsmith A.D."/>
            <person name="Gurjal M."/>
            <person name="Hansen N.F."/>
            <person name="Hayashizaki Y."/>
            <person name="Johnson-Hopson C."/>
            <person name="Hsuan V.W."/>
            <person name="Iida K."/>
            <person name="Karnes M."/>
            <person name="Khan S."/>
            <person name="Koesema E."/>
            <person name="Ishida J."/>
            <person name="Jiang P.X."/>
            <person name="Jones T."/>
            <person name="Kawai J."/>
            <person name="Kamiya A."/>
            <person name="Meyers C."/>
            <person name="Nakajima M."/>
            <person name="Narusaka M."/>
            <person name="Seki M."/>
            <person name="Sakurai T."/>
            <person name="Satou M."/>
            <person name="Tamse R."/>
            <person name="Vaysberg M."/>
            <person name="Wallender E.K."/>
            <person name="Wong C."/>
            <person name="Yamamura Y."/>
            <person name="Yuan S."/>
            <person name="Shinozaki K."/>
            <person name="Davis R.W."/>
            <person name="Theologis A."/>
            <person name="Ecker J.R."/>
        </authorList>
    </citation>
    <scope>NUCLEOTIDE SEQUENCE [LARGE SCALE MRNA]</scope>
    <source>
        <strain>cv. Columbia</strain>
    </source>
</reference>
<reference key="6">
    <citation type="submission" date="2006-07" db="EMBL/GenBank/DDBJ databases">
        <title>Large-scale analysis of RIKEN Arabidopsis full-length (RAFL) cDNAs.</title>
        <authorList>
            <person name="Totoki Y."/>
            <person name="Seki M."/>
            <person name="Ishida J."/>
            <person name="Nakajima M."/>
            <person name="Enju A."/>
            <person name="Kamiya A."/>
            <person name="Narusaka M."/>
            <person name="Shin-i T."/>
            <person name="Nakagawa M."/>
            <person name="Sakamoto N."/>
            <person name="Oishi K."/>
            <person name="Kohara Y."/>
            <person name="Kobayashi M."/>
            <person name="Toyoda A."/>
            <person name="Sakaki Y."/>
            <person name="Sakurai T."/>
            <person name="Iida K."/>
            <person name="Akiyama K."/>
            <person name="Satou M."/>
            <person name="Toyoda T."/>
            <person name="Konagaya A."/>
            <person name="Carninci P."/>
            <person name="Kawai J."/>
            <person name="Hayashizaki Y."/>
            <person name="Shinozaki K."/>
        </authorList>
    </citation>
    <scope>NUCLEOTIDE SEQUENCE [LARGE SCALE MRNA] OF 309-597</scope>
    <source>
        <strain>cv. Columbia</strain>
    </source>
</reference>
<reference key="7">
    <citation type="journal article" date="1999" name="Can. J. Bot.">
        <title>Defective control of growth rate and cell diameter in tip-growing root hairs of the rhd4 mutant of Arabidopsis thaliana.</title>
        <authorList>
            <person name="Galway M.E."/>
            <person name="Lane D.C."/>
            <person name="Schiefelbein J.W."/>
        </authorList>
    </citation>
    <scope>FUNCTION</scope>
</reference>
<reference key="8">
    <citation type="journal article" date="2008" name="Plant Cell">
        <title>Root hair defective4 encodes a phosphatidylinositol-4-phosphate phosphatase required for proper root hair development in Arabidopsis thaliana.</title>
        <authorList>
            <person name="Thole J.M."/>
            <person name="Vermeer J.E."/>
            <person name="Zhang Y."/>
            <person name="Gadella T.W. Jr."/>
            <person name="Nielsen E."/>
        </authorList>
    </citation>
    <scope>FUNCTION</scope>
    <scope>DISRUPTION PHENOTYPE</scope>
    <scope>SUBCELLULAR LOCATION</scope>
</reference>
<dbReference type="EC" id="3.1.3.-"/>
<dbReference type="EMBL" id="AF266459">
    <property type="protein sequence ID" value="AAP41368.1"/>
    <property type="molecule type" value="mRNA"/>
</dbReference>
<dbReference type="EMBL" id="AY227250">
    <property type="protein sequence ID" value="AAP49840.1"/>
    <property type="molecule type" value="mRNA"/>
</dbReference>
<dbReference type="EMBL" id="AL133452">
    <property type="protein sequence ID" value="CAB63010.1"/>
    <property type="status" value="ALT_SEQ"/>
    <property type="molecule type" value="Genomic_DNA"/>
</dbReference>
<dbReference type="EMBL" id="CP002686">
    <property type="protein sequence ID" value="AEE78795.1"/>
    <property type="molecule type" value="Genomic_DNA"/>
</dbReference>
<dbReference type="EMBL" id="AF360267">
    <property type="protein sequence ID" value="AAK25977.1"/>
    <property type="molecule type" value="mRNA"/>
</dbReference>
<dbReference type="EMBL" id="AY040078">
    <property type="protein sequence ID" value="AAK64136.1"/>
    <property type="molecule type" value="mRNA"/>
</dbReference>
<dbReference type="EMBL" id="AK229963">
    <property type="protein sequence ID" value="BAF01789.1"/>
    <property type="molecule type" value="mRNA"/>
</dbReference>
<dbReference type="PIR" id="T45777">
    <property type="entry name" value="T45777"/>
</dbReference>
<dbReference type="RefSeq" id="NP_190714.2">
    <property type="nucleotide sequence ID" value="NM_115005.5"/>
</dbReference>
<dbReference type="SMR" id="Q9C5G5"/>
<dbReference type="BioGRID" id="9627">
    <property type="interactions" value="3"/>
</dbReference>
<dbReference type="FunCoup" id="Q9C5G5">
    <property type="interactions" value="5697"/>
</dbReference>
<dbReference type="IntAct" id="Q9C5G5">
    <property type="interactions" value="1"/>
</dbReference>
<dbReference type="STRING" id="3702.Q9C5G5"/>
<dbReference type="iPTMnet" id="Q9C5G5"/>
<dbReference type="PaxDb" id="3702-AT3G51460.1"/>
<dbReference type="ProteomicsDB" id="232727"/>
<dbReference type="EnsemblPlants" id="AT3G51460.1">
    <property type="protein sequence ID" value="AT3G51460.1"/>
    <property type="gene ID" value="AT3G51460"/>
</dbReference>
<dbReference type="GeneID" id="824309"/>
<dbReference type="Gramene" id="AT3G51460.1">
    <property type="protein sequence ID" value="AT3G51460.1"/>
    <property type="gene ID" value="AT3G51460"/>
</dbReference>
<dbReference type="KEGG" id="ath:AT3G51460"/>
<dbReference type="Araport" id="AT3G51460"/>
<dbReference type="TAIR" id="AT3G51460">
    <property type="gene designation" value="RHD4"/>
</dbReference>
<dbReference type="eggNOG" id="KOG1889">
    <property type="taxonomic scope" value="Eukaryota"/>
</dbReference>
<dbReference type="HOGENOM" id="CLU_003016_7_2_1"/>
<dbReference type="InParanoid" id="Q9C5G5"/>
<dbReference type="OMA" id="ITKAQPV"/>
<dbReference type="PhylomeDB" id="Q9C5G5"/>
<dbReference type="BioCyc" id="ARA:AT3G51460-MONOMER"/>
<dbReference type="BRENDA" id="3.1.3.66">
    <property type="organism ID" value="399"/>
</dbReference>
<dbReference type="BRENDA" id="3.1.3.B4">
    <property type="organism ID" value="399"/>
</dbReference>
<dbReference type="CD-CODE" id="4299E36E">
    <property type="entry name" value="Nucleolus"/>
</dbReference>
<dbReference type="PRO" id="PR:Q9C5G5"/>
<dbReference type="Proteomes" id="UP000006548">
    <property type="component" value="Chromosome 3"/>
</dbReference>
<dbReference type="ExpressionAtlas" id="Q9C5G5">
    <property type="expression patterns" value="baseline and differential"/>
</dbReference>
<dbReference type="GO" id="GO:0030659">
    <property type="term" value="C:cytoplasmic vesicle membrane"/>
    <property type="evidence" value="ECO:0007669"/>
    <property type="project" value="UniProtKB-SubCell"/>
</dbReference>
<dbReference type="GO" id="GO:0005829">
    <property type="term" value="C:cytosol"/>
    <property type="evidence" value="ECO:0007005"/>
    <property type="project" value="TAIR"/>
</dbReference>
<dbReference type="GO" id="GO:0005783">
    <property type="term" value="C:endoplasmic reticulum"/>
    <property type="evidence" value="ECO:0000314"/>
    <property type="project" value="UniProtKB"/>
</dbReference>
<dbReference type="GO" id="GO:0005789">
    <property type="term" value="C:endoplasmic reticulum membrane"/>
    <property type="evidence" value="ECO:0007669"/>
    <property type="project" value="UniProtKB-SubCell"/>
</dbReference>
<dbReference type="GO" id="GO:0005886">
    <property type="term" value="C:plasma membrane"/>
    <property type="evidence" value="ECO:0007005"/>
    <property type="project" value="TAIR"/>
</dbReference>
<dbReference type="GO" id="GO:0031520">
    <property type="term" value="C:plasma membrane of cell tip"/>
    <property type="evidence" value="ECO:0000314"/>
    <property type="project" value="TAIR"/>
</dbReference>
<dbReference type="GO" id="GO:0009506">
    <property type="term" value="C:plasmodesma"/>
    <property type="evidence" value="ECO:0007005"/>
    <property type="project" value="TAIR"/>
</dbReference>
<dbReference type="GO" id="GO:0090404">
    <property type="term" value="C:pollen tube tip"/>
    <property type="evidence" value="ECO:0000314"/>
    <property type="project" value="TAIR"/>
</dbReference>
<dbReference type="GO" id="GO:0035619">
    <property type="term" value="C:root hair tip"/>
    <property type="evidence" value="ECO:0000314"/>
    <property type="project" value="TAIR"/>
</dbReference>
<dbReference type="GO" id="GO:0043812">
    <property type="term" value="F:phosphatidylinositol-4-phosphate phosphatase activity"/>
    <property type="evidence" value="ECO:0000314"/>
    <property type="project" value="TAIR"/>
</dbReference>
<dbReference type="GO" id="GO:0009611">
    <property type="term" value="P:response to wounding"/>
    <property type="evidence" value="ECO:0000303"/>
    <property type="project" value="UniProtKB"/>
</dbReference>
<dbReference type="GO" id="GO:0048768">
    <property type="term" value="P:root hair cell tip growth"/>
    <property type="evidence" value="ECO:0000315"/>
    <property type="project" value="TAIR"/>
</dbReference>
<dbReference type="InterPro" id="IPR002013">
    <property type="entry name" value="SAC_dom"/>
</dbReference>
<dbReference type="PANTHER" id="PTHR45662">
    <property type="entry name" value="PHOSPHATIDYLINOSITIDE PHOSPHATASE SAC1"/>
    <property type="match status" value="1"/>
</dbReference>
<dbReference type="PANTHER" id="PTHR45662:SF18">
    <property type="entry name" value="PHOSPHOINOSITIDE PHOSPHATASE SAC7"/>
    <property type="match status" value="1"/>
</dbReference>
<dbReference type="Pfam" id="PF02383">
    <property type="entry name" value="Syja_N"/>
    <property type="match status" value="1"/>
</dbReference>
<dbReference type="PROSITE" id="PS50275">
    <property type="entry name" value="SAC"/>
    <property type="match status" value="1"/>
</dbReference>
<sequence length="597" mass="68237">METVDSRNKLHSRLRLWEFPDQYIIEPADGSGSSCLDISRVDASMKLIDQVPESNSVRVPKIRSIFGVVGMLKLLAGSYLVVVTESERVGSFLGHPIFKVTTLKVLPCDHSLKNSPEEQKKMETEFSKLLSVAEKTTGLYFSYEVNLTLSSQRLHEMGDESKSLPLWRQAEPRFLWNNYMLEVLIDNKLDQFLLPVIQGSFNSFETAIGRDIVDITLIARRCTRRNGTRMWRRGADLDGYVANFVETEQIVQMNGYTSSFVQVRGSMPFMWEQVVDLTYKPKFEIVQPEEAKRIAERHFLDLRKKYGSVLAVDLVNKQGGEGRLCEKYATVMQHITGDDIRYLHFDFHQICGHIHFERLSILYEQIEGFLEKNGYFLLNEKGEKMKEQLGVVRSNCIDCLDRTNVTQSMIGRKMLEVQLKRIGVFGAEETISSHLNFDEHYKILWANHGDEISIQYSGTPALKGDFVRYGHRTAHGVLKDGWSSLRRYYLNNFADGTKQDAIDLLQGHYIVAVSRDMAPVPQKGGLEAVANFPVALFVVLMSFWFATMSLKQTGSDYKHKHLFFSLLWTGICVGMAALVRANGRIFCNRPRLHKPRG</sequence>
<feature type="chain" id="PRO_0000421973" description="Phosphoinositide phosphatase SAC7">
    <location>
        <begin position="1"/>
        <end position="597"/>
    </location>
</feature>
<feature type="transmembrane region" description="Helical" evidence="2">
    <location>
        <begin position="528"/>
        <end position="548"/>
    </location>
</feature>
<feature type="transmembrane region" description="Helical" evidence="2">
    <location>
        <begin position="559"/>
        <end position="579"/>
    </location>
</feature>
<feature type="domain" description="SAC" evidence="3">
    <location>
        <begin position="130"/>
        <end position="458"/>
    </location>
</feature>
<feature type="short sequence motif" description="Phosphatase catalytic core">
    <location>
        <begin position="393"/>
        <end position="404"/>
    </location>
</feature>
<protein>
    <recommendedName>
        <fullName>Phosphoinositide phosphatase SAC7</fullName>
        <shortName>AtSAC7</shortName>
        <ecNumber>3.1.3.-</ecNumber>
    </recommendedName>
    <alternativeName>
        <fullName>Protein ROOT HAIR DEFECTIVE 4</fullName>
    </alternativeName>
    <alternativeName>
        <fullName>Protein SUPPRESSOR OF ACTIN 1C</fullName>
        <shortName>AtSAC1c</shortName>
    </alternativeName>
    <alternativeName>
        <fullName>Protein SUPPRESSOR OF ACTIN 7</fullName>
    </alternativeName>
    <alternativeName>
        <fullName>SAC domain protein 7</fullName>
    </alternativeName>
    <alternativeName>
        <fullName>SAC1-like protein AtSAC1c</fullName>
    </alternativeName>
</protein>
<proteinExistence type="evidence at transcript level"/>
<evidence type="ECO:0000250" key="1"/>
<evidence type="ECO:0000255" key="2"/>
<evidence type="ECO:0000255" key="3">
    <source>
        <dbReference type="PROSITE-ProRule" id="PRU00183"/>
    </source>
</evidence>
<evidence type="ECO:0000269" key="4">
    <source>
    </source>
</evidence>
<evidence type="ECO:0000269" key="5">
    <source>
    </source>
</evidence>
<evidence type="ECO:0000269" key="6">
    <source>
    </source>
</evidence>
<evidence type="ECO:0000269" key="7">
    <source ref="7"/>
</evidence>
<evidence type="ECO:0000305" key="8"/>